<accession>Q05301</accession>
<organism>
    <name type="scientific">Mycobacterium phage L5</name>
    <name type="common">Mycobacteriophage L5</name>
    <dbReference type="NCBI Taxonomy" id="31757"/>
    <lineage>
        <taxon>Viruses</taxon>
        <taxon>Duplodnaviria</taxon>
        <taxon>Heunggongvirae</taxon>
        <taxon>Uroviricota</taxon>
        <taxon>Caudoviricetes</taxon>
        <taxon>Fromanvirus</taxon>
    </lineage>
</organism>
<gene>
    <name type="primary">84</name>
</gene>
<sequence length="66" mass="7424">MFKLIVRKNDSGLTGEATASGRRVLLDHLEACAARYGFEVDWYEPGESGYIKRNGKFVGTWEVSKL</sequence>
<keyword id="KW-1185">Reference proteome</keyword>
<organismHost>
    <name type="scientific">Mycobacterium</name>
    <dbReference type="NCBI Taxonomy" id="1763"/>
</organismHost>
<proteinExistence type="predicted"/>
<feature type="chain" id="PRO_0000164828" description="Gene 84 protein">
    <location>
        <begin position="1"/>
        <end position="66"/>
    </location>
</feature>
<protein>
    <recommendedName>
        <fullName>Gene 84 protein</fullName>
    </recommendedName>
    <alternativeName>
        <fullName>Gp84</fullName>
    </alternativeName>
</protein>
<reference key="1">
    <citation type="journal article" date="1993" name="Mol. Microbiol.">
        <title>DNA sequence, structure and gene expression of mycobacteriophage L5: a phage system for mycobacterial genetics.</title>
        <authorList>
            <person name="Hatfull G.F."/>
            <person name="Sarkis G.J."/>
        </authorList>
    </citation>
    <scope>NUCLEOTIDE SEQUENCE [LARGE SCALE GENOMIC DNA]</scope>
</reference>
<dbReference type="EMBL" id="Z18946">
    <property type="protein sequence ID" value="CAA79460.1"/>
    <property type="molecule type" value="Genomic_DNA"/>
</dbReference>
<dbReference type="PIR" id="S31029">
    <property type="entry name" value="S31029"/>
</dbReference>
<dbReference type="RefSeq" id="NP_039748.1">
    <property type="nucleotide sequence ID" value="NC_001335.1"/>
</dbReference>
<dbReference type="GeneID" id="2942916"/>
<dbReference type="KEGG" id="vg:2942916"/>
<dbReference type="OrthoDB" id="22256at10239"/>
<dbReference type="Proteomes" id="UP000002123">
    <property type="component" value="Genome"/>
</dbReference>
<dbReference type="InterPro" id="IPR056577">
    <property type="entry name" value="Phage_Gp84"/>
</dbReference>
<dbReference type="Pfam" id="PF23794">
    <property type="entry name" value="Phage_Gp84"/>
    <property type="match status" value="1"/>
</dbReference>
<name>VG84_BPML5</name>